<keyword id="KW-0045">Antibiotic biosynthesis</keyword>
<keyword id="KW-0413">Isomerase</keyword>
<name>PEPM_STRVT</name>
<protein>
    <recommendedName>
        <fullName>Phosphoenolpyruvate phosphomutase</fullName>
        <shortName>PEP mutase</shortName>
        <shortName>PEP phosphomutase</shortName>
        <shortName>Phosphoenolpyruvate mutase</shortName>
        <ecNumber>5.4.2.9</ecNumber>
    </recommendedName>
</protein>
<proteinExistence type="inferred from homology"/>
<organism>
    <name type="scientific">Streptomyces viridochromogenes (strain DSM 40736 / JCM 4977 / BCRC 1201 / Tue 494)</name>
    <dbReference type="NCBI Taxonomy" id="591159"/>
    <lineage>
        <taxon>Bacteria</taxon>
        <taxon>Bacillati</taxon>
        <taxon>Actinomycetota</taxon>
        <taxon>Actinomycetes</taxon>
        <taxon>Kitasatosporales</taxon>
        <taxon>Streptomycetaceae</taxon>
        <taxon>Streptomyces</taxon>
    </lineage>
</organism>
<dbReference type="EC" id="5.4.2.9"/>
<dbReference type="EMBL" id="X65195">
    <property type="protein sequence ID" value="CAJ14044.1"/>
    <property type="molecule type" value="Genomic_DNA"/>
</dbReference>
<dbReference type="SMR" id="O86937"/>
<dbReference type="STRING" id="591159.SSQG_01039"/>
<dbReference type="eggNOG" id="COG2513">
    <property type="taxonomic scope" value="Bacteria"/>
</dbReference>
<dbReference type="UniPathway" id="UPA00197"/>
<dbReference type="GO" id="GO:0050188">
    <property type="term" value="F:phosphoenolpyruvate mutase activity"/>
    <property type="evidence" value="ECO:0007669"/>
    <property type="project" value="UniProtKB-EC"/>
</dbReference>
<dbReference type="GO" id="GO:0017000">
    <property type="term" value="P:antibiotic biosynthetic process"/>
    <property type="evidence" value="ECO:0007669"/>
    <property type="project" value="UniProtKB-KW"/>
</dbReference>
<dbReference type="CDD" id="cd00377">
    <property type="entry name" value="ICL_PEPM"/>
    <property type="match status" value="1"/>
</dbReference>
<dbReference type="Gene3D" id="3.20.20.60">
    <property type="entry name" value="Phosphoenolpyruvate-binding domains"/>
    <property type="match status" value="1"/>
</dbReference>
<dbReference type="InterPro" id="IPR039556">
    <property type="entry name" value="ICL/PEPM"/>
</dbReference>
<dbReference type="InterPro" id="IPR012698">
    <property type="entry name" value="PEnolPyrv_PMutase_core"/>
</dbReference>
<dbReference type="InterPro" id="IPR015813">
    <property type="entry name" value="Pyrv/PenolPyrv_kinase-like_dom"/>
</dbReference>
<dbReference type="InterPro" id="IPR040442">
    <property type="entry name" value="Pyrv_kinase-like_dom_sf"/>
</dbReference>
<dbReference type="NCBIfam" id="TIGR02320">
    <property type="entry name" value="PEP_mutase"/>
    <property type="match status" value="1"/>
</dbReference>
<dbReference type="PANTHER" id="PTHR42905">
    <property type="entry name" value="PHOSPHOENOLPYRUVATE CARBOXYLASE"/>
    <property type="match status" value="1"/>
</dbReference>
<dbReference type="PANTHER" id="PTHR42905:SF7">
    <property type="entry name" value="PHOSPHOENOLPYRUVATE PHOSPHOMUTASE"/>
    <property type="match status" value="1"/>
</dbReference>
<dbReference type="Pfam" id="PF13714">
    <property type="entry name" value="PEP_mutase"/>
    <property type="match status" value="1"/>
</dbReference>
<dbReference type="SUPFAM" id="SSF51621">
    <property type="entry name" value="Phosphoenolpyruvate/pyruvate domain"/>
    <property type="match status" value="1"/>
</dbReference>
<comment type="function">
    <text>Formation of a carbon-phosphorus bond by converting phosphoenolpyruvate (PEP) to phosphonopyruvate (P-Pyr).</text>
</comment>
<comment type="catalytic activity">
    <reaction>
        <text>phosphoenolpyruvate + H(+) = 3-phosphonopyruvate</text>
        <dbReference type="Rhea" id="RHEA:17013"/>
        <dbReference type="ChEBI" id="CHEBI:15378"/>
        <dbReference type="ChEBI" id="CHEBI:58702"/>
        <dbReference type="ChEBI" id="CHEBI:71402"/>
        <dbReference type="EC" id="5.4.2.9"/>
    </reaction>
</comment>
<comment type="pathway">
    <text evidence="4">Secondary metabolite biosynthesis; bialaphos biosynthesis.</text>
</comment>
<comment type="similarity">
    <text evidence="3">Belongs to the isocitrate lyase/PEP mutase superfamily. PEP mutase family.</text>
</comment>
<accession>O86937</accession>
<accession>Q4JFE7</accession>
<sequence>MNATERPGSDGTGSPESVGSRLKNLLHGPGTCQLMGVHDGLSARIAVAEGFEALWASGLCMSTARGVRDSDEASWTELLTLVGTMTEAAPGAPVLVDGDTGYGNFNTARPSPPAPSCLGAAGVCFEDKVFPKMNSFFGDGHQLAPIGEFSGKIKACKDTQRDPGFVVVARTEALISNLPMEEALTRAHAYVEAVADGLFIHSRMSTPQQIAEFMRQWDGSAPILIAPTTYHRPSLDDFAALGIAGCIWANHSMRAAFSAMRDVCQQIRADRGIFGVEERVAPLKEIFGLLDYESLEQDENRYTQAPDLAPVQG</sequence>
<reference key="1">
    <citation type="journal article" date="1998" name="FEMS Microbiol. Lett.">
        <title>Isolation and characterization of the PEP-phosphomutase and the phosphonopyruvate decarboxylase genes from the phosphinothricin tripeptide producer Streptomyces viridochromogenes Tu494.</title>
        <authorList>
            <person name="Schwartz D."/>
            <person name="Recktenwald J."/>
            <person name="Pelzer S."/>
            <person name="Wohlleben W."/>
        </authorList>
    </citation>
    <scope>NUCLEOTIDE SEQUENCE [GENOMIC DNA]</scope>
    <source>
        <strain>DSM 40736 / JCM 4977 / BCRC 1201 / Tue 494</strain>
    </source>
</reference>
<evidence type="ECO:0000250" key="1"/>
<evidence type="ECO:0000256" key="2">
    <source>
        <dbReference type="SAM" id="MobiDB-lite"/>
    </source>
</evidence>
<evidence type="ECO:0000305" key="3"/>
<evidence type="ECO:0000305" key="4">
    <source>
    </source>
</evidence>
<feature type="chain" id="PRO_0000068826" description="Phosphoenolpyruvate phosphomutase">
    <location>
        <begin position="1"/>
        <end position="313"/>
    </location>
</feature>
<feature type="region of interest" description="Disordered" evidence="2">
    <location>
        <begin position="1"/>
        <end position="23"/>
    </location>
</feature>
<feature type="active site" description="Nucleophile" evidence="1">
    <location>
        <position position="69"/>
    </location>
</feature>
<gene>
    <name type="primary">ppm</name>
</gene>